<reference key="1">
    <citation type="journal article" date="1993" name="Yeast">
        <title>Three yeast genes, PIR1, PIR2 and PIR3, containing internal tandem repeats, are related to each other, and PIR1 and PIR2 are required for tolerance to heat shock.</title>
        <authorList>
            <person name="Toh-e A."/>
            <person name="Yasunaga S."/>
            <person name="Nisogi H."/>
            <person name="Tanaka K."/>
            <person name="Oguchi T."/>
            <person name="Matsui Y."/>
        </authorList>
    </citation>
    <scope>NUCLEOTIDE SEQUENCE [GENOMIC DNA]</scope>
    <source>
        <strain>RAY-3AD</strain>
    </source>
</reference>
<reference key="2">
    <citation type="journal article" date="1994" name="Yeast">
        <title>DNA sequencing of a 36.2 kb fragment located between the FAS1 and LAP loci of chromosome XI of Saccharomyces cerevisiae.</title>
        <authorList>
            <person name="Vandenbol M."/>
            <person name="Bolle P.-A."/>
            <person name="Dion C."/>
            <person name="Portetelle D."/>
            <person name="Hilger F."/>
        </authorList>
    </citation>
    <scope>NUCLEOTIDE SEQUENCE [GENOMIC DNA]</scope>
    <source>
        <strain>ATCC 204508 / S288c</strain>
    </source>
</reference>
<reference key="3">
    <citation type="journal article" date="1994" name="Nature">
        <title>Complete DNA sequence of yeast chromosome XI.</title>
        <authorList>
            <person name="Dujon B."/>
            <person name="Alexandraki D."/>
            <person name="Andre B."/>
            <person name="Ansorge W."/>
            <person name="Baladron V."/>
            <person name="Ballesta J.P.G."/>
            <person name="Banrevi A."/>
            <person name="Bolle P.-A."/>
            <person name="Bolotin-Fukuhara M."/>
            <person name="Bossier P."/>
            <person name="Bou G."/>
            <person name="Boyer J."/>
            <person name="Buitrago M.J."/>
            <person name="Cheret G."/>
            <person name="Colleaux L."/>
            <person name="Daignan-Fornier B."/>
            <person name="del Rey F."/>
            <person name="Dion C."/>
            <person name="Domdey H."/>
            <person name="Duesterhoeft A."/>
            <person name="Duesterhus S."/>
            <person name="Entian K.-D."/>
            <person name="Erfle H."/>
            <person name="Esteban P.F."/>
            <person name="Feldmann H."/>
            <person name="Fernandes L."/>
            <person name="Fobo G.M."/>
            <person name="Fritz C."/>
            <person name="Fukuhara H."/>
            <person name="Gabel C."/>
            <person name="Gaillon L."/>
            <person name="Garcia-Cantalejo J.M."/>
            <person name="Garcia-Ramirez J.J."/>
            <person name="Gent M.E."/>
            <person name="Ghazvini M."/>
            <person name="Goffeau A."/>
            <person name="Gonzalez A."/>
            <person name="Grothues D."/>
            <person name="Guerreiro P."/>
            <person name="Hegemann J.H."/>
            <person name="Hewitt N."/>
            <person name="Hilger F."/>
            <person name="Hollenberg C.P."/>
            <person name="Horaitis O."/>
            <person name="Indge K.J."/>
            <person name="Jacquier A."/>
            <person name="James C.M."/>
            <person name="Jauniaux J.-C."/>
            <person name="Jimenez A."/>
            <person name="Keuchel H."/>
            <person name="Kirchrath L."/>
            <person name="Kleine K."/>
            <person name="Koetter P."/>
            <person name="Legrain P."/>
            <person name="Liebl S."/>
            <person name="Louis E.J."/>
            <person name="Maia e Silva A."/>
            <person name="Marck C."/>
            <person name="Monnier A.-L."/>
            <person name="Moestl D."/>
            <person name="Mueller S."/>
            <person name="Obermaier B."/>
            <person name="Oliver S.G."/>
            <person name="Pallier C."/>
            <person name="Pascolo S."/>
            <person name="Pfeiffer F."/>
            <person name="Philippsen P."/>
            <person name="Planta R.J."/>
            <person name="Pohl F.M."/>
            <person name="Pohl T.M."/>
            <person name="Poehlmann R."/>
            <person name="Portetelle D."/>
            <person name="Purnelle B."/>
            <person name="Puzos V."/>
            <person name="Ramezani Rad M."/>
            <person name="Rasmussen S.W."/>
            <person name="Remacha M.A."/>
            <person name="Revuelta J.L."/>
            <person name="Richard G.-F."/>
            <person name="Rieger M."/>
            <person name="Rodrigues-Pousada C."/>
            <person name="Rose M."/>
            <person name="Rupp T."/>
            <person name="Santos M.A."/>
            <person name="Schwager C."/>
            <person name="Sensen C."/>
            <person name="Skala J."/>
            <person name="Soares H."/>
            <person name="Sor F."/>
            <person name="Stegemann J."/>
            <person name="Tettelin H."/>
            <person name="Thierry A."/>
            <person name="Tzermia M."/>
            <person name="Urrestarazu L.A."/>
            <person name="van Dyck L."/>
            <person name="van Vliet-Reedijk J.C."/>
            <person name="Valens M."/>
            <person name="Vandenbol M."/>
            <person name="Vilela C."/>
            <person name="Vissers S."/>
            <person name="von Wettstein D."/>
            <person name="Voss H."/>
            <person name="Wiemann S."/>
            <person name="Xu G."/>
            <person name="Zimmermann J."/>
            <person name="Haasemann M."/>
            <person name="Becker I."/>
            <person name="Mewes H.-W."/>
        </authorList>
    </citation>
    <scope>NUCLEOTIDE SEQUENCE [LARGE SCALE GENOMIC DNA]</scope>
    <source>
        <strain>ATCC 204508 / S288c</strain>
    </source>
</reference>
<reference key="4">
    <citation type="journal article" date="2014" name="G3 (Bethesda)">
        <title>The reference genome sequence of Saccharomyces cerevisiae: Then and now.</title>
        <authorList>
            <person name="Engel S.R."/>
            <person name="Dietrich F.S."/>
            <person name="Fisk D.G."/>
            <person name="Binkley G."/>
            <person name="Balakrishnan R."/>
            <person name="Costanzo M.C."/>
            <person name="Dwight S.S."/>
            <person name="Hitz B.C."/>
            <person name="Karra K."/>
            <person name="Nash R.S."/>
            <person name="Weng S."/>
            <person name="Wong E.D."/>
            <person name="Lloyd P."/>
            <person name="Skrzypek M.S."/>
            <person name="Miyasato S.R."/>
            <person name="Simison M."/>
            <person name="Cherry J.M."/>
        </authorList>
    </citation>
    <scope>GENOME REANNOTATION</scope>
    <source>
        <strain>ATCC 204508 / S288c</strain>
    </source>
</reference>
<reference key="5">
    <citation type="journal article" date="1997" name="Yeast">
        <title>Specific labelling of cell wall proteins by biotinylation. Identification of four covalently linked O-mannosylated proteins of Saccharomyces cerevisiae.</title>
        <authorList>
            <person name="Mrsa V."/>
            <person name="Seidl T."/>
            <person name="Gentzsch M."/>
            <person name="Tanner W."/>
        </authorList>
    </citation>
    <scope>PROTEIN SEQUENCE OF 19-22</scope>
    <scope>CLEAVAGE BY KEX2</scope>
    <scope>GLYCOSYLATION</scope>
</reference>
<reference key="6">
    <citation type="journal article" date="1993" name="J. Biol. Chem.">
        <title>Partial purification and characterization of early and late endosomes from yeast. Identification of four novel proteins.</title>
        <authorList>
            <person name="Singer-Krueger B."/>
            <person name="Frank R."/>
            <person name="Crausaz F."/>
            <person name="Riezman H."/>
        </authorList>
    </citation>
    <scope>PROTEIN SEQUENCE OF 68-77</scope>
    <source>
        <strain>RH732</strain>
    </source>
</reference>
<reference key="7">
    <citation type="journal article" date="1997" name="Proc. Natl. Acad. Sci. U.S.A.">
        <title>Stress proteins on the yeast cell surface determine resistance to osmotin, a plant antifungal protein.</title>
        <authorList>
            <person name="Yun D.-J."/>
            <person name="Zhao Y."/>
            <person name="Pardo J.M."/>
            <person name="Narasimhan M.L."/>
            <person name="Damsz B."/>
            <person name="Lee H."/>
            <person name="Abad L.R."/>
            <person name="D'Urzo M.P."/>
            <person name="Hasegawa P.M."/>
            <person name="Bressan R.A."/>
        </authorList>
    </citation>
    <scope>FUNCTION</scope>
    <scope>SUBCELLULAR LOCATION</scope>
</reference>
<reference key="8">
    <citation type="journal article" date="1999" name="Mol. Microbiol.">
        <title>Genome-wide analysis of gene expression regulated by the yeast cell wall integrity signalling pathway.</title>
        <authorList>
            <person name="Jung U.S."/>
            <person name="Levin D.E."/>
        </authorList>
    </citation>
    <scope>INDUCTION</scope>
</reference>
<reference key="9">
    <citation type="journal article" date="1999" name="Yeast">
        <title>Role of NaOH-extractable cell wall proteins Ccw5p, Ccw6p, Ccw7p and Ccw8p (members of the Pir protein family) in stability of the Saccharomyces cerevisiae cell wall.</title>
        <authorList>
            <person name="Mrsa V."/>
            <person name="Tanner W."/>
        </authorList>
    </citation>
    <scope>FUNCTION</scope>
    <scope>SUBCELLULAR LOCATION</scope>
</reference>
<reference key="10">
    <citation type="journal article" date="2001" name="Mol. Microbiol.">
        <title>Overlapping and distinct roles of the duplicated yeast transcription factors Ace2p and Swi5p.</title>
        <authorList>
            <person name="Doolin M.-T."/>
            <person name="Johnson A.L."/>
            <person name="Johnston L.H."/>
            <person name="Butler G."/>
        </authorList>
    </citation>
    <scope>INDUCTION</scope>
</reference>
<reference key="11">
    <citation type="journal article" date="2004" name="Microbiology">
        <title>Increased mortality of Saccharomyces cerevisiae cell wall protein mutants.</title>
        <authorList>
            <person name="Teparic R."/>
            <person name="Stuparevic I."/>
            <person name="Mrsa V."/>
        </authorList>
    </citation>
    <scope>FUNCTION</scope>
</reference>
<reference key="12">
    <citation type="journal article" date="2004" name="Yeast">
        <title>Characterization of the transcriptional response to cell wall stress in Saccharomyces cerevisiae.</title>
        <authorList>
            <person name="Boorsma A."/>
            <person name="de Nobel H."/>
            <person name="ter Riet B."/>
            <person name="Bargmann B."/>
            <person name="Brul S."/>
            <person name="Hellingwerf K.J."/>
            <person name="Klis F.M."/>
        </authorList>
    </citation>
    <scope>INDUCTION</scope>
</reference>
<reference key="13">
    <citation type="journal article" date="2005" name="J. Biol. Chem.">
        <title>Comprehensive proteomic analysis of Saccharomyces cerevisiae cell walls: identification of proteins covalently attached via glycosylphosphatidylinositol remnants or mild alkali-sensitive linkages.</title>
        <authorList>
            <person name="Yin Q.Y."/>
            <person name="de Groot P.W.J."/>
            <person name="Dekker H.L."/>
            <person name="de Jong L."/>
            <person name="Klis F.M."/>
            <person name="de Koster C.G."/>
        </authorList>
    </citation>
    <scope>SUBCELLULAR LOCATION</scope>
    <scope>IDENTIFICATION BY MASS SPECTROMETRY</scope>
</reference>
<reference key="14">
    <citation type="journal article" date="2005" name="Nat. Genet.">
        <title>Intragenic tandem repeats generate functional variability.</title>
        <authorList>
            <person name="Verstrepen K.J."/>
            <person name="Jansen A."/>
            <person name="Lewitter F."/>
            <person name="Fink G.R."/>
        </authorList>
    </citation>
    <scope>REPEATS</scope>
</reference>
<reference key="15">
    <citation type="journal article" date="2007" name="FEMS Yeast Res.">
        <title>Mass spectrometric quantitation of covalently bound cell wall proteins in Saccharomyces cerevisiae.</title>
        <authorList>
            <person name="Yin Q.Y."/>
            <person name="de Groot P.W.J."/>
            <person name="de Jong L."/>
            <person name="Klis F.M."/>
            <person name="de Koster C.G."/>
        </authorList>
    </citation>
    <scope>INDUCTION</scope>
</reference>
<comment type="function">
    <text evidence="3 7 12">Component of the outer cell wall layer. Required for stability of the cell wall and for optimal growth. Required for resistance against several antifungal and cell wall-perturbing agents.</text>
</comment>
<comment type="subcellular location">
    <subcellularLocation>
        <location evidence="3 8 12">Secreted</location>
        <location evidence="3 8 12">Cell wall</location>
    </subcellularLocation>
    <text>Covalently attached to the cell wall.</text>
</comment>
<comment type="induction">
    <text evidence="4 5 6 10">Positively regulated by signaling through MPK1 in response to cell wall perturbation. Expression is regulated by the ACE2 and SWI5 transcription factors.</text>
</comment>
<comment type="domain">
    <text evidence="1">The PIR1/2/3 repeats are required for covalent linkage to the cell wall (By similarity). Their number varies among different strains of S.cerevisiae.</text>
</comment>
<comment type="PTM">
    <text evidence="1">Covalently linked to beta-1,3-glucan of the inner cell wall layer via an alkali-sensitive ester linkage between the gamma-carboxyl group of glutamic acids, arising from specific glutamines within the PIR1/2/3 repeats, and hydroxyl groups of glucoses of beta-1,3-glucan chains.</text>
</comment>
<comment type="PTM">
    <text evidence="13">O-glycosylated. Extensively O-mannosylated.</text>
</comment>
<comment type="similarity">
    <text evidence="14">Belongs to the PIR protein family.</text>
</comment>
<sequence length="325" mass="33004">MQYKKPLVVSALAATSLAAYAPKDPWSTLTPSATYKGGITDYSSSFGIAIEAVATSASSVASSKAKRAASQIGDGQVQAATTTAAVSKKSTAAAVSQITDGQVQAAKSTAAAVSQITDGQVQAAKSTAAAVSQITDGQVQAAKSTAAAVSQITDGQVQAAKSTAAAASQISDGQVQATTSTKAAASQITDGQIQASKTTSGASQVSDGQVQATAEVKDANDPVDVVSCNNNSTLSMSLSKGILTDRKGRIGSIVANRQFQFDGPPPQAGAIYAAGWSITPEGNLALGDQDTFYQCLSGDFYNLYDKHIGSQCHEVYLQAIDLIDC</sequence>
<organism>
    <name type="scientific">Saccharomyces cerevisiae (strain ATCC 204508 / S288c)</name>
    <name type="common">Baker's yeast</name>
    <dbReference type="NCBI Taxonomy" id="559292"/>
    <lineage>
        <taxon>Eukaryota</taxon>
        <taxon>Fungi</taxon>
        <taxon>Dikarya</taxon>
        <taxon>Ascomycota</taxon>
        <taxon>Saccharomycotina</taxon>
        <taxon>Saccharomycetes</taxon>
        <taxon>Saccharomycetales</taxon>
        <taxon>Saccharomycetaceae</taxon>
        <taxon>Saccharomyces</taxon>
    </lineage>
</organism>
<feature type="signal peptide" evidence="13">
    <location>
        <begin position="1"/>
        <end position="18"/>
    </location>
</feature>
<feature type="propeptide" id="PRO_0000033256" evidence="11">
    <location>
        <begin position="19"/>
        <end position="67"/>
    </location>
</feature>
<feature type="chain" id="PRO_0000033257" description="Cell wall mannoprotein PIR3">
    <location>
        <begin position="68"/>
        <end position="325"/>
    </location>
</feature>
<feature type="repeat" description="PIR1/2/3 1" evidence="2 9">
    <location>
        <begin position="68"/>
        <end position="91"/>
    </location>
</feature>
<feature type="repeat" description="PIR1/2/3 2" evidence="2 9">
    <location>
        <begin position="92"/>
        <end position="109"/>
    </location>
</feature>
<feature type="repeat" description="PIR1/2/3 3" evidence="2 9">
    <location>
        <begin position="110"/>
        <end position="127"/>
    </location>
</feature>
<feature type="repeat" description="PIR1/2/3 4" evidence="2 9">
    <location>
        <begin position="128"/>
        <end position="145"/>
    </location>
</feature>
<feature type="repeat" description="PIR1/2/3 5" evidence="2 9">
    <location>
        <begin position="146"/>
        <end position="163"/>
    </location>
</feature>
<feature type="repeat" description="PIR1/2/3 6" evidence="2 9">
    <location>
        <begin position="164"/>
        <end position="181"/>
    </location>
</feature>
<feature type="repeat" description="PIR1/2/3 7" evidence="2 9">
    <location>
        <begin position="182"/>
        <end position="199"/>
    </location>
</feature>
<feature type="repeat" description="PIR1/2/3 8" evidence="2 9">
    <location>
        <begin position="200"/>
        <end position="217"/>
    </location>
</feature>
<feature type="site" description="Cleavage; by KEX2">
    <location>
        <begin position="67"/>
        <end position="68"/>
    </location>
</feature>
<feature type="site" description="Covalent attachment to cell wall glycan" evidence="1">
    <location>
        <position position="76"/>
    </location>
</feature>
<feature type="site" description="Covalent attachment to cell wall glycan" evidence="1">
    <location>
        <position position="102"/>
    </location>
</feature>
<feature type="site" description="Covalent attachment to cell wall glycan" evidence="1">
    <location>
        <position position="120"/>
    </location>
</feature>
<feature type="site" description="Covalent attachment to cell wall glycan" evidence="1">
    <location>
        <position position="138"/>
    </location>
</feature>
<feature type="site" description="Covalent attachment to cell wall glycan" evidence="1">
    <location>
        <position position="156"/>
    </location>
</feature>
<feature type="site" description="Covalent attachment to cell wall glycan" evidence="1">
    <location>
        <position position="174"/>
    </location>
</feature>
<feature type="site" description="Covalent attachment to cell wall glycan" evidence="1">
    <location>
        <position position="192"/>
    </location>
</feature>
<feature type="site" description="Covalent attachment to cell wall glycan" evidence="1">
    <location>
        <position position="209"/>
    </location>
</feature>
<feature type="sequence variant" description="In strain: RAY-3AD.">
    <original>V</original>
    <variation>A</variation>
    <location>
        <position position="113"/>
    </location>
</feature>
<feature type="sequence variant" description="In strain: RAY-3AD.">
    <original>T</original>
    <variation>S</variation>
    <location>
        <position position="117"/>
    </location>
</feature>
<feature type="sequence variant" description="In strain: RAY-3AD.">
    <original>S</original>
    <variation>STAAAVSQITDGQVQAAKSTAAAASQISDGQVQAAKS</variation>
    <location>
        <position position="144"/>
    </location>
</feature>
<gene>
    <name type="primary">PIR3</name>
    <name type="synonym">CCW8</name>
    <name type="ordered locus">YKL163W</name>
    <name type="ORF">YKL617</name>
</gene>
<evidence type="ECO:0000250" key="1"/>
<evidence type="ECO:0000255" key="2">
    <source>
        <dbReference type="PROSITE-ProRule" id="PRU00149"/>
    </source>
</evidence>
<evidence type="ECO:0000269" key="3">
    <source>
    </source>
</evidence>
<evidence type="ECO:0000269" key="4">
    <source>
    </source>
</evidence>
<evidence type="ECO:0000269" key="5">
    <source>
    </source>
</evidence>
<evidence type="ECO:0000269" key="6">
    <source>
    </source>
</evidence>
<evidence type="ECO:0000269" key="7">
    <source>
    </source>
</evidence>
<evidence type="ECO:0000269" key="8">
    <source>
    </source>
</evidence>
<evidence type="ECO:0000269" key="9">
    <source>
    </source>
</evidence>
<evidence type="ECO:0000269" key="10">
    <source>
    </source>
</evidence>
<evidence type="ECO:0000269" key="11">
    <source>
    </source>
</evidence>
<evidence type="ECO:0000269" key="12">
    <source>
    </source>
</evidence>
<evidence type="ECO:0000269" key="13">
    <source>
    </source>
</evidence>
<evidence type="ECO:0000305" key="14"/>
<accession>Q03180</accession>
<accession>D6VX36</accession>
<protein>
    <recommendedName>
        <fullName>Cell wall mannoprotein PIR3</fullName>
    </recommendedName>
    <alternativeName>
        <fullName>Covalently-linked cell wall protein 8</fullName>
    </alternativeName>
    <alternativeName>
        <fullName>Protein with internal repeats 3</fullName>
    </alternativeName>
</protein>
<proteinExistence type="evidence at protein level"/>
<dbReference type="EMBL" id="D13742">
    <property type="protein sequence ID" value="BAA02887.1"/>
    <property type="molecule type" value="Genomic_DNA"/>
</dbReference>
<dbReference type="EMBL" id="Z26877">
    <property type="protein sequence ID" value="CAA81491.1"/>
    <property type="molecule type" value="Genomic_DNA"/>
</dbReference>
<dbReference type="EMBL" id="Z28163">
    <property type="protein sequence ID" value="CAA82005.1"/>
    <property type="molecule type" value="Genomic_DNA"/>
</dbReference>
<dbReference type="EMBL" id="BK006944">
    <property type="protein sequence ID" value="DAA09002.1"/>
    <property type="molecule type" value="Genomic_DNA"/>
</dbReference>
<dbReference type="PIR" id="S37788">
    <property type="entry name" value="S37788"/>
</dbReference>
<dbReference type="RefSeq" id="NP_012758.1">
    <property type="nucleotide sequence ID" value="NM_001179729.1"/>
</dbReference>
<dbReference type="BioGRID" id="33975">
    <property type="interactions" value="42"/>
</dbReference>
<dbReference type="DIP" id="DIP-4752N"/>
<dbReference type="FunCoup" id="Q03180">
    <property type="interactions" value="85"/>
</dbReference>
<dbReference type="IntAct" id="Q03180">
    <property type="interactions" value="1"/>
</dbReference>
<dbReference type="STRING" id="4932.YKL163W"/>
<dbReference type="PaxDb" id="4932-YKL163W"/>
<dbReference type="PeptideAtlas" id="Q03180"/>
<dbReference type="EnsemblFungi" id="YKL163W_mRNA">
    <property type="protein sequence ID" value="YKL163W"/>
    <property type="gene ID" value="YKL163W"/>
</dbReference>
<dbReference type="GeneID" id="853693"/>
<dbReference type="KEGG" id="sce:YKL163W"/>
<dbReference type="AGR" id="SGD:S000001646"/>
<dbReference type="SGD" id="S000001646">
    <property type="gene designation" value="PIR3"/>
</dbReference>
<dbReference type="VEuPathDB" id="FungiDB:YKL163W"/>
<dbReference type="eggNOG" id="ENOG502QQD8">
    <property type="taxonomic scope" value="Eukaryota"/>
</dbReference>
<dbReference type="GeneTree" id="ENSGT00940000176350"/>
<dbReference type="HOGENOM" id="CLU_039662_0_0_1"/>
<dbReference type="InParanoid" id="Q03180"/>
<dbReference type="OMA" id="MQYKKPL"/>
<dbReference type="OrthoDB" id="5415592at2759"/>
<dbReference type="BioCyc" id="YEAST:G3O-31931-MONOMER"/>
<dbReference type="BioGRID-ORCS" id="853693">
    <property type="hits" value="1 hit in 10 CRISPR screens"/>
</dbReference>
<dbReference type="PRO" id="PR:Q03180"/>
<dbReference type="Proteomes" id="UP000002311">
    <property type="component" value="Chromosome XI"/>
</dbReference>
<dbReference type="RNAct" id="Q03180">
    <property type="molecule type" value="protein"/>
</dbReference>
<dbReference type="GO" id="GO:0005576">
    <property type="term" value="C:extracellular region"/>
    <property type="evidence" value="ECO:0007669"/>
    <property type="project" value="UniProtKB-KW"/>
</dbReference>
<dbReference type="GO" id="GO:0009277">
    <property type="term" value="C:fungal-type cell wall"/>
    <property type="evidence" value="ECO:0000314"/>
    <property type="project" value="SGD"/>
</dbReference>
<dbReference type="GO" id="GO:0005199">
    <property type="term" value="F:structural constituent of cell wall"/>
    <property type="evidence" value="ECO:0000314"/>
    <property type="project" value="SGD"/>
</dbReference>
<dbReference type="GO" id="GO:0031505">
    <property type="term" value="P:fungal-type cell wall organization"/>
    <property type="evidence" value="ECO:0000315"/>
    <property type="project" value="SGD"/>
</dbReference>
<dbReference type="InterPro" id="IPR054508">
    <property type="entry name" value="PIR1-like_C"/>
</dbReference>
<dbReference type="InterPro" id="IPR051153">
    <property type="entry name" value="Yeast_CWMannoprotein_PIR"/>
</dbReference>
<dbReference type="InterPro" id="IPR000420">
    <property type="entry name" value="Yeast_PIR_rpt"/>
</dbReference>
<dbReference type="PANTHER" id="PTHR47254">
    <property type="entry name" value="CELL WALL MANNOPROTEIN CIS3-RELATED"/>
    <property type="match status" value="1"/>
</dbReference>
<dbReference type="PANTHER" id="PTHR47254:SF1">
    <property type="entry name" value="CELL WALL MANNOPROTEIN CIS3-RELATED"/>
    <property type="match status" value="1"/>
</dbReference>
<dbReference type="Pfam" id="PF00399">
    <property type="entry name" value="PIR"/>
    <property type="match status" value="7"/>
</dbReference>
<dbReference type="Pfam" id="PF22799">
    <property type="entry name" value="PIR1-like_C"/>
    <property type="match status" value="1"/>
</dbReference>
<dbReference type="PROSITE" id="PS00929">
    <property type="entry name" value="PIR_REPEAT_1"/>
    <property type="match status" value="8"/>
</dbReference>
<dbReference type="PROSITE" id="PS50256">
    <property type="entry name" value="PIR_REPEAT_2"/>
    <property type="match status" value="8"/>
</dbReference>
<keyword id="KW-0134">Cell wall</keyword>
<keyword id="KW-0961">Cell wall biogenesis/degradation</keyword>
<keyword id="KW-0165">Cleavage on pair of basic residues</keyword>
<keyword id="KW-0903">Direct protein sequencing</keyword>
<keyword id="KW-0325">Glycoprotein</keyword>
<keyword id="KW-1185">Reference proteome</keyword>
<keyword id="KW-0677">Repeat</keyword>
<keyword id="KW-0964">Secreted</keyword>
<keyword id="KW-0732">Signal</keyword>
<name>PIR3_YEAST</name>